<evidence type="ECO:0000255" key="1">
    <source>
        <dbReference type="HAMAP-Rule" id="MF_00472"/>
    </source>
</evidence>
<evidence type="ECO:0000305" key="2"/>
<protein>
    <recommendedName>
        <fullName evidence="1">Ubiquinone biosynthesis O-methyltransferase</fullName>
    </recommendedName>
    <alternativeName>
        <fullName evidence="1">2-polyprenyl-6-hydroxyphenol methylase</fullName>
        <ecNumber evidence="1">2.1.1.222</ecNumber>
    </alternativeName>
    <alternativeName>
        <fullName evidence="1">3-demethylubiquinone 3-O-methyltransferase</fullName>
        <ecNumber evidence="1">2.1.1.64</ecNumber>
    </alternativeName>
</protein>
<organism>
    <name type="scientific">Pseudomonas syringae pv. tomato (strain ATCC BAA-871 / DC3000)</name>
    <dbReference type="NCBI Taxonomy" id="223283"/>
    <lineage>
        <taxon>Bacteria</taxon>
        <taxon>Pseudomonadati</taxon>
        <taxon>Pseudomonadota</taxon>
        <taxon>Gammaproteobacteria</taxon>
        <taxon>Pseudomonadales</taxon>
        <taxon>Pseudomonadaceae</taxon>
        <taxon>Pseudomonas</taxon>
    </lineage>
</organism>
<gene>
    <name evidence="1" type="primary">ubiG</name>
    <name type="ordered locus">PSPTO_1742</name>
</gene>
<sequence length="232" mass="25933">MSNVDRAEIAKFEALAHRWWDRESEFKPLHDINPLRVNWIDERANLAGKKVLDVGCGGGILSEAMALRGATVTGIDMGEAPLAVAQLHQLESGVSVEYRQITAEDLAEEMPEQFDVVTCLEMLEHVPDPSSVIRACHRMVKPGGQVFFSTINRNPKAYLFAVVGAEYILNLLPRGTHDFKKFIRPSELGAWSRDAGLQVKDIIGLTYNPLTKHYKLASDVDVNYMIQTLREA</sequence>
<feature type="chain" id="PRO_0000193393" description="Ubiquinone biosynthesis O-methyltransferase">
    <location>
        <begin position="1"/>
        <end position="232"/>
    </location>
</feature>
<feature type="binding site" evidence="1">
    <location>
        <position position="36"/>
    </location>
    <ligand>
        <name>S-adenosyl-L-methionine</name>
        <dbReference type="ChEBI" id="CHEBI:59789"/>
    </ligand>
</feature>
<feature type="binding site" evidence="1">
    <location>
        <position position="55"/>
    </location>
    <ligand>
        <name>S-adenosyl-L-methionine</name>
        <dbReference type="ChEBI" id="CHEBI:59789"/>
    </ligand>
</feature>
<feature type="binding site" evidence="1">
    <location>
        <position position="76"/>
    </location>
    <ligand>
        <name>S-adenosyl-L-methionine</name>
        <dbReference type="ChEBI" id="CHEBI:59789"/>
    </ligand>
</feature>
<feature type="binding site" evidence="1">
    <location>
        <position position="120"/>
    </location>
    <ligand>
        <name>S-adenosyl-L-methionine</name>
        <dbReference type="ChEBI" id="CHEBI:59789"/>
    </ligand>
</feature>
<accession>Q885T9</accession>
<proteinExistence type="inferred from homology"/>
<keyword id="KW-0489">Methyltransferase</keyword>
<keyword id="KW-1185">Reference proteome</keyword>
<keyword id="KW-0949">S-adenosyl-L-methionine</keyword>
<keyword id="KW-0808">Transferase</keyword>
<keyword id="KW-0831">Ubiquinone biosynthesis</keyword>
<comment type="function">
    <text evidence="1">O-methyltransferase that catalyzes the 2 O-methylation steps in the ubiquinone biosynthetic pathway.</text>
</comment>
<comment type="catalytic activity">
    <reaction evidence="1">
        <text>a 3-demethylubiquinol + S-adenosyl-L-methionine = a ubiquinol + S-adenosyl-L-homocysteine + H(+)</text>
        <dbReference type="Rhea" id="RHEA:44380"/>
        <dbReference type="Rhea" id="RHEA-COMP:9566"/>
        <dbReference type="Rhea" id="RHEA-COMP:10914"/>
        <dbReference type="ChEBI" id="CHEBI:15378"/>
        <dbReference type="ChEBI" id="CHEBI:17976"/>
        <dbReference type="ChEBI" id="CHEBI:57856"/>
        <dbReference type="ChEBI" id="CHEBI:59789"/>
        <dbReference type="ChEBI" id="CHEBI:84422"/>
        <dbReference type="EC" id="2.1.1.64"/>
    </reaction>
</comment>
<comment type="catalytic activity">
    <reaction evidence="1">
        <text>a 3-(all-trans-polyprenyl)benzene-1,2-diol + S-adenosyl-L-methionine = a 2-methoxy-6-(all-trans-polyprenyl)phenol + S-adenosyl-L-homocysteine + H(+)</text>
        <dbReference type="Rhea" id="RHEA:31411"/>
        <dbReference type="Rhea" id="RHEA-COMP:9550"/>
        <dbReference type="Rhea" id="RHEA-COMP:9551"/>
        <dbReference type="ChEBI" id="CHEBI:15378"/>
        <dbReference type="ChEBI" id="CHEBI:57856"/>
        <dbReference type="ChEBI" id="CHEBI:59789"/>
        <dbReference type="ChEBI" id="CHEBI:62729"/>
        <dbReference type="ChEBI" id="CHEBI:62731"/>
        <dbReference type="EC" id="2.1.1.222"/>
    </reaction>
</comment>
<comment type="pathway">
    <text evidence="1">Cofactor biosynthesis; ubiquinone biosynthesis.</text>
</comment>
<comment type="similarity">
    <text evidence="1">Belongs to the methyltransferase superfamily. UbiG/COQ3 family.</text>
</comment>
<comment type="sequence caution" evidence="2">
    <conflict type="erroneous initiation">
        <sequence resource="EMBL-CDS" id="AAO55262"/>
    </conflict>
</comment>
<dbReference type="EC" id="2.1.1.222" evidence="1"/>
<dbReference type="EC" id="2.1.1.64" evidence="1"/>
<dbReference type="EMBL" id="AE016853">
    <property type="protein sequence ID" value="AAO55262.1"/>
    <property type="status" value="ALT_INIT"/>
    <property type="molecule type" value="Genomic_DNA"/>
</dbReference>
<dbReference type="RefSeq" id="NP_791567.1">
    <property type="nucleotide sequence ID" value="NC_004578.1"/>
</dbReference>
<dbReference type="RefSeq" id="WP_005766737.1">
    <property type="nucleotide sequence ID" value="NC_004578.1"/>
</dbReference>
<dbReference type="SMR" id="Q885T9"/>
<dbReference type="STRING" id="223283.PSPTO_1742"/>
<dbReference type="GeneID" id="1183379"/>
<dbReference type="KEGG" id="pst:PSPTO_1742"/>
<dbReference type="PATRIC" id="fig|223283.9.peg.1769"/>
<dbReference type="eggNOG" id="COG2227">
    <property type="taxonomic scope" value="Bacteria"/>
</dbReference>
<dbReference type="HOGENOM" id="CLU_042432_5_0_6"/>
<dbReference type="OrthoDB" id="9801538at2"/>
<dbReference type="UniPathway" id="UPA00232"/>
<dbReference type="Proteomes" id="UP000002515">
    <property type="component" value="Chromosome"/>
</dbReference>
<dbReference type="GO" id="GO:0102208">
    <property type="term" value="F:2-polyprenyl-6-hydroxyphenol methylase activity"/>
    <property type="evidence" value="ECO:0007669"/>
    <property type="project" value="UniProtKB-EC"/>
</dbReference>
<dbReference type="GO" id="GO:0061542">
    <property type="term" value="F:3-demethylubiquinol 3-O-methyltransferase activity"/>
    <property type="evidence" value="ECO:0007669"/>
    <property type="project" value="UniProtKB-UniRule"/>
</dbReference>
<dbReference type="GO" id="GO:0010420">
    <property type="term" value="F:polyprenyldihydroxybenzoate methyltransferase activity"/>
    <property type="evidence" value="ECO:0007669"/>
    <property type="project" value="InterPro"/>
</dbReference>
<dbReference type="GO" id="GO:0032259">
    <property type="term" value="P:methylation"/>
    <property type="evidence" value="ECO:0007669"/>
    <property type="project" value="UniProtKB-KW"/>
</dbReference>
<dbReference type="CDD" id="cd02440">
    <property type="entry name" value="AdoMet_MTases"/>
    <property type="match status" value="1"/>
</dbReference>
<dbReference type="FunFam" id="3.40.50.150:FF:000028">
    <property type="entry name" value="Ubiquinone biosynthesis O-methyltransferase"/>
    <property type="match status" value="1"/>
</dbReference>
<dbReference type="Gene3D" id="3.40.50.150">
    <property type="entry name" value="Vaccinia Virus protein VP39"/>
    <property type="match status" value="1"/>
</dbReference>
<dbReference type="HAMAP" id="MF_00472">
    <property type="entry name" value="UbiG"/>
    <property type="match status" value="1"/>
</dbReference>
<dbReference type="InterPro" id="IPR029063">
    <property type="entry name" value="SAM-dependent_MTases_sf"/>
</dbReference>
<dbReference type="InterPro" id="IPR010233">
    <property type="entry name" value="UbiG_MeTrfase"/>
</dbReference>
<dbReference type="NCBIfam" id="TIGR01983">
    <property type="entry name" value="UbiG"/>
    <property type="match status" value="1"/>
</dbReference>
<dbReference type="PANTHER" id="PTHR43464">
    <property type="entry name" value="METHYLTRANSFERASE"/>
    <property type="match status" value="1"/>
</dbReference>
<dbReference type="PANTHER" id="PTHR43464:SF19">
    <property type="entry name" value="UBIQUINONE BIOSYNTHESIS O-METHYLTRANSFERASE, MITOCHONDRIAL"/>
    <property type="match status" value="1"/>
</dbReference>
<dbReference type="Pfam" id="PF13489">
    <property type="entry name" value="Methyltransf_23"/>
    <property type="match status" value="1"/>
</dbReference>
<dbReference type="SUPFAM" id="SSF53335">
    <property type="entry name" value="S-adenosyl-L-methionine-dependent methyltransferases"/>
    <property type="match status" value="1"/>
</dbReference>
<reference key="1">
    <citation type="journal article" date="2003" name="Proc. Natl. Acad. Sci. U.S.A.">
        <title>The complete genome sequence of the Arabidopsis and tomato pathogen Pseudomonas syringae pv. tomato DC3000.</title>
        <authorList>
            <person name="Buell C.R."/>
            <person name="Joardar V."/>
            <person name="Lindeberg M."/>
            <person name="Selengut J."/>
            <person name="Paulsen I.T."/>
            <person name="Gwinn M.L."/>
            <person name="Dodson R.J."/>
            <person name="DeBoy R.T."/>
            <person name="Durkin A.S."/>
            <person name="Kolonay J.F."/>
            <person name="Madupu R."/>
            <person name="Daugherty S.C."/>
            <person name="Brinkac L.M."/>
            <person name="Beanan M.J."/>
            <person name="Haft D.H."/>
            <person name="Nelson W.C."/>
            <person name="Davidsen T.M."/>
            <person name="Zafar N."/>
            <person name="Zhou L."/>
            <person name="Liu J."/>
            <person name="Yuan Q."/>
            <person name="Khouri H.M."/>
            <person name="Fedorova N.B."/>
            <person name="Tran B."/>
            <person name="Russell D."/>
            <person name="Berry K.J."/>
            <person name="Utterback T.R."/>
            <person name="Van Aken S.E."/>
            <person name="Feldblyum T.V."/>
            <person name="D'Ascenzo M."/>
            <person name="Deng W.-L."/>
            <person name="Ramos A.R."/>
            <person name="Alfano J.R."/>
            <person name="Cartinhour S."/>
            <person name="Chatterjee A.K."/>
            <person name="Delaney T.P."/>
            <person name="Lazarowitz S.G."/>
            <person name="Martin G.B."/>
            <person name="Schneider D.J."/>
            <person name="Tang X."/>
            <person name="Bender C.L."/>
            <person name="White O."/>
            <person name="Fraser C.M."/>
            <person name="Collmer A."/>
        </authorList>
    </citation>
    <scope>NUCLEOTIDE SEQUENCE [LARGE SCALE GENOMIC DNA]</scope>
    <source>
        <strain>ATCC BAA-871 / DC3000</strain>
    </source>
</reference>
<name>UBIG_PSESM</name>